<sequence>MKKMPLFSKSHKNPAEIVKILKDNLAILEKQDKKTDKASEEVSKSLQAMKEILCGTNEKEPPTEAVAQLAQELYSSGLLVTLIADLQLIDFEGKKDVTQIFNNILRRQIGTRSPTVEYISAHPHILFMLLKGYEAPQIALRCGIMLRECIRHEPLAKIILFSNQFRDFFKYVELSTFDIASDAFATFKDLLTRHKVLVADFLEQNYDTIFEDYEKLLQSENYVTKRQSLKLLGELILDRHNFAIMTKYISKPENLKLMMNLLRDKSPNIQFEAFHVFKVFVASPHKTQPIVEILLKNQPKLIEFLSSFQKERTDDEQFADEKNYLIKQIRDLKKTAP</sequence>
<name>CB39L_HUMAN</name>
<proteinExistence type="evidence at protein level"/>
<organism>
    <name type="scientific">Homo sapiens</name>
    <name type="common">Human</name>
    <dbReference type="NCBI Taxonomy" id="9606"/>
    <lineage>
        <taxon>Eukaryota</taxon>
        <taxon>Metazoa</taxon>
        <taxon>Chordata</taxon>
        <taxon>Craniata</taxon>
        <taxon>Vertebrata</taxon>
        <taxon>Euteleostomi</taxon>
        <taxon>Mammalia</taxon>
        <taxon>Eutheria</taxon>
        <taxon>Euarchontoglires</taxon>
        <taxon>Primates</taxon>
        <taxon>Haplorrhini</taxon>
        <taxon>Catarrhini</taxon>
        <taxon>Hominidae</taxon>
        <taxon>Homo</taxon>
    </lineage>
</organism>
<reference key="1">
    <citation type="journal article" date="2005" name="Leuk. Res.">
        <title>Serological identification of immunogenic antigens in acute monocytic leukemia.</title>
        <authorList>
            <person name="Chen G."/>
            <person name="Zhang W.G."/>
            <person name="Cao X.M."/>
            <person name="Li F.Y."/>
            <person name="Liu X.P."/>
            <person name="Yao L.B."/>
        </authorList>
    </citation>
    <scope>NUCLEOTIDE SEQUENCE [MRNA]</scope>
    <source>
        <tissue>Monocytic leukemia</tissue>
    </source>
</reference>
<reference key="2">
    <citation type="journal article" date="2004" name="Nature">
        <title>The DNA sequence and analysis of human chromosome 13.</title>
        <authorList>
            <person name="Dunham A."/>
            <person name="Matthews L.H."/>
            <person name="Burton J."/>
            <person name="Ashurst J.L."/>
            <person name="Howe K.L."/>
            <person name="Ashcroft K.J."/>
            <person name="Beare D.M."/>
            <person name="Burford D.C."/>
            <person name="Hunt S.E."/>
            <person name="Griffiths-Jones S."/>
            <person name="Jones M.C."/>
            <person name="Keenan S.J."/>
            <person name="Oliver K."/>
            <person name="Scott C.E."/>
            <person name="Ainscough R."/>
            <person name="Almeida J.P."/>
            <person name="Ambrose K.D."/>
            <person name="Andrews D.T."/>
            <person name="Ashwell R.I.S."/>
            <person name="Babbage A.K."/>
            <person name="Bagguley C.L."/>
            <person name="Bailey J."/>
            <person name="Bannerjee R."/>
            <person name="Barlow K.F."/>
            <person name="Bates K."/>
            <person name="Beasley H."/>
            <person name="Bird C.P."/>
            <person name="Bray-Allen S."/>
            <person name="Brown A.J."/>
            <person name="Brown J.Y."/>
            <person name="Burrill W."/>
            <person name="Carder C."/>
            <person name="Carter N.P."/>
            <person name="Chapman J.C."/>
            <person name="Clamp M.E."/>
            <person name="Clark S.Y."/>
            <person name="Clarke G."/>
            <person name="Clee C.M."/>
            <person name="Clegg S.C."/>
            <person name="Cobley V."/>
            <person name="Collins J.E."/>
            <person name="Corby N."/>
            <person name="Coville G.J."/>
            <person name="Deloukas P."/>
            <person name="Dhami P."/>
            <person name="Dunham I."/>
            <person name="Dunn M."/>
            <person name="Earthrowl M.E."/>
            <person name="Ellington A.G."/>
            <person name="Faulkner L."/>
            <person name="Frankish A.G."/>
            <person name="Frankland J."/>
            <person name="French L."/>
            <person name="Garner P."/>
            <person name="Garnett J."/>
            <person name="Gilbert J.G.R."/>
            <person name="Gilson C.J."/>
            <person name="Ghori J."/>
            <person name="Grafham D.V."/>
            <person name="Gribble S.M."/>
            <person name="Griffiths C."/>
            <person name="Hall R.E."/>
            <person name="Hammond S."/>
            <person name="Harley J.L."/>
            <person name="Hart E.A."/>
            <person name="Heath P.D."/>
            <person name="Howden P.J."/>
            <person name="Huckle E.J."/>
            <person name="Hunt P.J."/>
            <person name="Hunt A.R."/>
            <person name="Johnson C."/>
            <person name="Johnson D."/>
            <person name="Kay M."/>
            <person name="Kimberley A.M."/>
            <person name="King A."/>
            <person name="Laird G.K."/>
            <person name="Langford C.J."/>
            <person name="Lawlor S."/>
            <person name="Leongamornlert D.A."/>
            <person name="Lloyd D.M."/>
            <person name="Lloyd C."/>
            <person name="Loveland J.E."/>
            <person name="Lovell J."/>
            <person name="Martin S."/>
            <person name="Mashreghi-Mohammadi M."/>
            <person name="McLaren S.J."/>
            <person name="McMurray A."/>
            <person name="Milne S."/>
            <person name="Moore M.J.F."/>
            <person name="Nickerson T."/>
            <person name="Palmer S.A."/>
            <person name="Pearce A.V."/>
            <person name="Peck A.I."/>
            <person name="Pelan S."/>
            <person name="Phillimore B."/>
            <person name="Porter K.M."/>
            <person name="Rice C.M."/>
            <person name="Searle S."/>
            <person name="Sehra H.K."/>
            <person name="Shownkeen R."/>
            <person name="Skuce C.D."/>
            <person name="Smith M."/>
            <person name="Steward C.A."/>
            <person name="Sycamore N."/>
            <person name="Tester J."/>
            <person name="Thomas D.W."/>
            <person name="Tracey A."/>
            <person name="Tromans A."/>
            <person name="Tubby B."/>
            <person name="Wall M."/>
            <person name="Wallis J.M."/>
            <person name="West A.P."/>
            <person name="Whitehead S.L."/>
            <person name="Willey D.L."/>
            <person name="Wilming L."/>
            <person name="Wray P.W."/>
            <person name="Wright M.W."/>
            <person name="Young L."/>
            <person name="Coulson A."/>
            <person name="Durbin R.M."/>
            <person name="Hubbard T."/>
            <person name="Sulston J.E."/>
            <person name="Beck S."/>
            <person name="Bentley D.R."/>
            <person name="Rogers J."/>
            <person name="Ross M.T."/>
        </authorList>
    </citation>
    <scope>NUCLEOTIDE SEQUENCE [LARGE SCALE GENOMIC DNA]</scope>
</reference>
<reference key="3">
    <citation type="journal article" date="2004" name="Genome Res.">
        <title>The status, quality, and expansion of the NIH full-length cDNA project: the Mammalian Gene Collection (MGC).</title>
        <authorList>
            <consortium name="The MGC Project Team"/>
        </authorList>
    </citation>
    <scope>NUCLEOTIDE SEQUENCE [LARGE SCALE MRNA]</scope>
    <source>
        <tissue>Placenta</tissue>
    </source>
</reference>
<reference key="4">
    <citation type="journal article" date="2004" name="Nat. Genet.">
        <title>Complete sequencing and characterization of 21,243 full-length human cDNAs.</title>
        <authorList>
            <person name="Ota T."/>
            <person name="Suzuki Y."/>
            <person name="Nishikawa T."/>
            <person name="Otsuki T."/>
            <person name="Sugiyama T."/>
            <person name="Irie R."/>
            <person name="Wakamatsu A."/>
            <person name="Hayashi K."/>
            <person name="Sato H."/>
            <person name="Nagai K."/>
            <person name="Kimura K."/>
            <person name="Makita H."/>
            <person name="Sekine M."/>
            <person name="Obayashi M."/>
            <person name="Nishi T."/>
            <person name="Shibahara T."/>
            <person name="Tanaka T."/>
            <person name="Ishii S."/>
            <person name="Yamamoto J."/>
            <person name="Saito K."/>
            <person name="Kawai Y."/>
            <person name="Isono Y."/>
            <person name="Nakamura Y."/>
            <person name="Nagahari K."/>
            <person name="Murakami K."/>
            <person name="Yasuda T."/>
            <person name="Iwayanagi T."/>
            <person name="Wagatsuma M."/>
            <person name="Shiratori A."/>
            <person name="Sudo H."/>
            <person name="Hosoiri T."/>
            <person name="Kaku Y."/>
            <person name="Kodaira H."/>
            <person name="Kondo H."/>
            <person name="Sugawara M."/>
            <person name="Takahashi M."/>
            <person name="Kanda K."/>
            <person name="Yokoi T."/>
            <person name="Furuya T."/>
            <person name="Kikkawa E."/>
            <person name="Omura Y."/>
            <person name="Abe K."/>
            <person name="Kamihara K."/>
            <person name="Katsuta N."/>
            <person name="Sato K."/>
            <person name="Tanikawa M."/>
            <person name="Yamazaki M."/>
            <person name="Ninomiya K."/>
            <person name="Ishibashi T."/>
            <person name="Yamashita H."/>
            <person name="Murakawa K."/>
            <person name="Fujimori K."/>
            <person name="Tanai H."/>
            <person name="Kimata M."/>
            <person name="Watanabe M."/>
            <person name="Hiraoka S."/>
            <person name="Chiba Y."/>
            <person name="Ishida S."/>
            <person name="Ono Y."/>
            <person name="Takiguchi S."/>
            <person name="Watanabe S."/>
            <person name="Yosida M."/>
            <person name="Hotuta T."/>
            <person name="Kusano J."/>
            <person name="Kanehori K."/>
            <person name="Takahashi-Fujii A."/>
            <person name="Hara H."/>
            <person name="Tanase T.-O."/>
            <person name="Nomura Y."/>
            <person name="Togiya S."/>
            <person name="Komai F."/>
            <person name="Hara R."/>
            <person name="Takeuchi K."/>
            <person name="Arita M."/>
            <person name="Imose N."/>
            <person name="Musashino K."/>
            <person name="Yuuki H."/>
            <person name="Oshima A."/>
            <person name="Sasaki N."/>
            <person name="Aotsuka S."/>
            <person name="Yoshikawa Y."/>
            <person name="Matsunawa H."/>
            <person name="Ichihara T."/>
            <person name="Shiohata N."/>
            <person name="Sano S."/>
            <person name="Moriya S."/>
            <person name="Momiyama H."/>
            <person name="Satoh N."/>
            <person name="Takami S."/>
            <person name="Terashima Y."/>
            <person name="Suzuki O."/>
            <person name="Nakagawa S."/>
            <person name="Senoh A."/>
            <person name="Mizoguchi H."/>
            <person name="Goto Y."/>
            <person name="Shimizu F."/>
            <person name="Wakebe H."/>
            <person name="Hishigaki H."/>
            <person name="Watanabe T."/>
            <person name="Sugiyama A."/>
            <person name="Takemoto M."/>
            <person name="Kawakami B."/>
            <person name="Yamazaki M."/>
            <person name="Watanabe K."/>
            <person name="Kumagai A."/>
            <person name="Itakura S."/>
            <person name="Fukuzumi Y."/>
            <person name="Fujimori Y."/>
            <person name="Komiyama M."/>
            <person name="Tashiro H."/>
            <person name="Tanigami A."/>
            <person name="Fujiwara T."/>
            <person name="Ono T."/>
            <person name="Yamada K."/>
            <person name="Fujii Y."/>
            <person name="Ozaki K."/>
            <person name="Hirao M."/>
            <person name="Ohmori Y."/>
            <person name="Kawabata A."/>
            <person name="Hikiji T."/>
            <person name="Kobatake N."/>
            <person name="Inagaki H."/>
            <person name="Ikema Y."/>
            <person name="Okamoto S."/>
            <person name="Okitani R."/>
            <person name="Kawakami T."/>
            <person name="Noguchi S."/>
            <person name="Itoh T."/>
            <person name="Shigeta K."/>
            <person name="Senba T."/>
            <person name="Matsumura K."/>
            <person name="Nakajima Y."/>
            <person name="Mizuno T."/>
            <person name="Morinaga M."/>
            <person name="Sasaki M."/>
            <person name="Togashi T."/>
            <person name="Oyama M."/>
            <person name="Hata H."/>
            <person name="Watanabe M."/>
            <person name="Komatsu T."/>
            <person name="Mizushima-Sugano J."/>
            <person name="Satoh T."/>
            <person name="Shirai Y."/>
            <person name="Takahashi Y."/>
            <person name="Nakagawa K."/>
            <person name="Okumura K."/>
            <person name="Nagase T."/>
            <person name="Nomura N."/>
            <person name="Kikuchi H."/>
            <person name="Masuho Y."/>
            <person name="Yamashita R."/>
            <person name="Nakai K."/>
            <person name="Yada T."/>
            <person name="Nakamura Y."/>
            <person name="Ohara O."/>
            <person name="Isogai T."/>
            <person name="Sugano S."/>
        </authorList>
    </citation>
    <scope>NUCLEOTIDE SEQUENCE [LARGE SCALE MRNA] OF 7-337</scope>
</reference>
<reference key="5">
    <citation type="journal article" date="2011" name="BMC Syst. Biol.">
        <title>Initial characterization of the human central proteome.</title>
        <authorList>
            <person name="Burkard T.R."/>
            <person name="Planyavsky M."/>
            <person name="Kaupe I."/>
            <person name="Breitwieser F.P."/>
            <person name="Buerckstuemmer T."/>
            <person name="Bennett K.L."/>
            <person name="Superti-Furga G."/>
            <person name="Colinge J."/>
        </authorList>
    </citation>
    <scope>IDENTIFICATION BY MASS SPECTROMETRY [LARGE SCALE ANALYSIS]</scope>
</reference>
<protein>
    <recommendedName>
        <fullName>Calcium-binding protein 39-like</fullName>
    </recommendedName>
    <alternativeName>
        <fullName>Antigen MLAA-34</fullName>
    </alternativeName>
    <alternativeName>
        <fullName>MO25beta</fullName>
    </alternativeName>
    <alternativeName>
        <fullName>Mo25-like protein</fullName>
    </alternativeName>
</protein>
<evidence type="ECO:0000250" key="1"/>
<evidence type="ECO:0000305" key="2"/>
<evidence type="ECO:0007829" key="3">
    <source>
        <dbReference type="PDB" id="3ZHP"/>
    </source>
</evidence>
<dbReference type="EMBL" id="AY288977">
    <property type="protein sequence ID" value="AAQ93064.2"/>
    <property type="molecule type" value="mRNA"/>
</dbReference>
<dbReference type="EMBL" id="AL136218">
    <property type="status" value="NOT_ANNOTATED_CDS"/>
    <property type="molecule type" value="Genomic_DNA"/>
</dbReference>
<dbReference type="EMBL" id="AL138875">
    <property type="status" value="NOT_ANNOTATED_CDS"/>
    <property type="molecule type" value="Genomic_DNA"/>
</dbReference>
<dbReference type="EMBL" id="BC010993">
    <property type="protein sequence ID" value="AAH10993.2"/>
    <property type="molecule type" value="mRNA"/>
</dbReference>
<dbReference type="EMBL" id="AK022639">
    <property type="protein sequence ID" value="BAB14147.1"/>
    <property type="status" value="ALT_INIT"/>
    <property type="molecule type" value="mRNA"/>
</dbReference>
<dbReference type="CCDS" id="CCDS9416.2"/>
<dbReference type="RefSeq" id="NP_001073138.1">
    <property type="nucleotide sequence ID" value="NM_001079670.3"/>
</dbReference>
<dbReference type="RefSeq" id="NP_001274266.1">
    <property type="nucleotide sequence ID" value="NM_001287337.2"/>
</dbReference>
<dbReference type="RefSeq" id="NP_001274267.1">
    <property type="nucleotide sequence ID" value="NM_001287338.2"/>
</dbReference>
<dbReference type="RefSeq" id="NP_001274268.1">
    <property type="nucleotide sequence ID" value="NM_001287339.2"/>
</dbReference>
<dbReference type="RefSeq" id="NP_112187.2">
    <property type="nucleotide sequence ID" value="NM_030925.4"/>
</dbReference>
<dbReference type="RefSeq" id="XP_011533556.1">
    <property type="nucleotide sequence ID" value="XM_011535254.2"/>
</dbReference>
<dbReference type="RefSeq" id="XP_011533557.1">
    <property type="nucleotide sequence ID" value="XM_011535255.2"/>
</dbReference>
<dbReference type="RefSeq" id="XP_011533558.1">
    <property type="nucleotide sequence ID" value="XM_011535256.2"/>
</dbReference>
<dbReference type="RefSeq" id="XP_016876274.1">
    <property type="nucleotide sequence ID" value="XM_017020785.1"/>
</dbReference>
<dbReference type="RefSeq" id="XP_016876275.1">
    <property type="nucleotide sequence ID" value="XM_017020786.1"/>
</dbReference>
<dbReference type="RefSeq" id="XP_016876276.1">
    <property type="nucleotide sequence ID" value="XM_017020787.1"/>
</dbReference>
<dbReference type="RefSeq" id="XP_016876277.1">
    <property type="nucleotide sequence ID" value="XM_017020788.1"/>
</dbReference>
<dbReference type="RefSeq" id="XP_047286649.1">
    <property type="nucleotide sequence ID" value="XM_047430693.1"/>
</dbReference>
<dbReference type="RefSeq" id="XP_047286650.1">
    <property type="nucleotide sequence ID" value="XM_047430694.1"/>
</dbReference>
<dbReference type="RefSeq" id="XP_047286651.1">
    <property type="nucleotide sequence ID" value="XM_047430695.1"/>
</dbReference>
<dbReference type="RefSeq" id="XP_047286652.1">
    <property type="nucleotide sequence ID" value="XM_047430696.1"/>
</dbReference>
<dbReference type="RefSeq" id="XP_047286653.1">
    <property type="nucleotide sequence ID" value="XM_047430697.1"/>
</dbReference>
<dbReference type="RefSeq" id="XP_047286654.1">
    <property type="nucleotide sequence ID" value="XM_047430698.1"/>
</dbReference>
<dbReference type="RefSeq" id="XP_047286655.1">
    <property type="nucleotide sequence ID" value="XM_047430699.1"/>
</dbReference>
<dbReference type="RefSeq" id="XP_054231033.1">
    <property type="nucleotide sequence ID" value="XM_054375058.1"/>
</dbReference>
<dbReference type="RefSeq" id="XP_054231034.1">
    <property type="nucleotide sequence ID" value="XM_054375059.1"/>
</dbReference>
<dbReference type="RefSeq" id="XP_054231035.1">
    <property type="nucleotide sequence ID" value="XM_054375060.1"/>
</dbReference>
<dbReference type="RefSeq" id="XP_054231036.1">
    <property type="nucleotide sequence ID" value="XM_054375061.1"/>
</dbReference>
<dbReference type="PDB" id="3ZHP">
    <property type="method" value="X-ray"/>
    <property type="resolution" value="2.90 A"/>
    <property type="chains" value="A/B=5-337"/>
</dbReference>
<dbReference type="PDBsum" id="3ZHP"/>
<dbReference type="SMR" id="Q9H9S4"/>
<dbReference type="BioGRID" id="123552">
    <property type="interactions" value="34"/>
</dbReference>
<dbReference type="ComplexPortal" id="CPX-2431">
    <property type="entry name" value="LKB1-STRAD-MO25 serine/threonine protein kinase complex, CAB39L-STRADA variant"/>
</dbReference>
<dbReference type="ComplexPortal" id="CPX-2869">
    <property type="entry name" value="LKB1-STRAD-MO25 serine/threonine protein kinase complex, CAB39L-STRADB variant"/>
</dbReference>
<dbReference type="FunCoup" id="Q9H9S4">
    <property type="interactions" value="1415"/>
</dbReference>
<dbReference type="IntAct" id="Q9H9S4">
    <property type="interactions" value="26"/>
</dbReference>
<dbReference type="MINT" id="Q9H9S4"/>
<dbReference type="STRING" id="9606.ENSP00000479669"/>
<dbReference type="iPTMnet" id="Q9H9S4"/>
<dbReference type="PhosphoSitePlus" id="Q9H9S4"/>
<dbReference type="SwissPalm" id="Q9H9S4"/>
<dbReference type="BioMuta" id="CAB39L"/>
<dbReference type="DMDM" id="51338824"/>
<dbReference type="jPOST" id="Q9H9S4"/>
<dbReference type="MassIVE" id="Q9H9S4"/>
<dbReference type="PaxDb" id="9606-ENSP00000479669"/>
<dbReference type="PeptideAtlas" id="Q9H9S4"/>
<dbReference type="ProteomicsDB" id="81359"/>
<dbReference type="Pumba" id="Q9H9S4"/>
<dbReference type="Antibodypedia" id="23903">
    <property type="antibodies" value="182 antibodies from 30 providers"/>
</dbReference>
<dbReference type="DNASU" id="81617"/>
<dbReference type="Ensembl" id="ENST00000347776.9">
    <property type="protein sequence ID" value="ENSP00000261669.7"/>
    <property type="gene ID" value="ENSG00000102547.19"/>
</dbReference>
<dbReference type="Ensembl" id="ENST00000355854.8">
    <property type="protein sequence ID" value="ENSP00000348113.4"/>
    <property type="gene ID" value="ENSG00000102547.19"/>
</dbReference>
<dbReference type="Ensembl" id="ENST00000409308.6">
    <property type="protein sequence ID" value="ENSP00000386375.1"/>
    <property type="gene ID" value="ENSG00000102547.19"/>
</dbReference>
<dbReference type="Ensembl" id="ENST00000410043.5">
    <property type="protein sequence ID" value="ENSP00000386328.1"/>
    <property type="gene ID" value="ENSG00000102547.19"/>
</dbReference>
<dbReference type="Ensembl" id="ENST00000610540.4">
    <property type="protein sequence ID" value="ENSP00000479669.1"/>
    <property type="gene ID" value="ENSG00000102547.19"/>
</dbReference>
<dbReference type="GeneID" id="81617"/>
<dbReference type="KEGG" id="hsa:81617"/>
<dbReference type="MANE-Select" id="ENST00000409308.6">
    <property type="protein sequence ID" value="ENSP00000386375.1"/>
    <property type="RefSeq nucleotide sequence ID" value="NM_001079670.3"/>
    <property type="RefSeq protein sequence ID" value="NP_001073138.1"/>
</dbReference>
<dbReference type="UCSC" id="uc001vcw.5">
    <property type="organism name" value="human"/>
</dbReference>
<dbReference type="AGR" id="HGNC:20290"/>
<dbReference type="CTD" id="81617"/>
<dbReference type="DisGeNET" id="81617"/>
<dbReference type="GeneCards" id="CAB39L"/>
<dbReference type="HGNC" id="HGNC:20290">
    <property type="gene designation" value="CAB39L"/>
</dbReference>
<dbReference type="HPA" id="ENSG00000102547">
    <property type="expression patterns" value="Tissue enhanced (choroid)"/>
</dbReference>
<dbReference type="MIM" id="612175">
    <property type="type" value="gene"/>
</dbReference>
<dbReference type="neXtProt" id="NX_Q9H9S4"/>
<dbReference type="OpenTargets" id="ENSG00000102547"/>
<dbReference type="PharmGKB" id="PA134913801"/>
<dbReference type="VEuPathDB" id="HostDB:ENSG00000102547"/>
<dbReference type="eggNOG" id="KOG1566">
    <property type="taxonomic scope" value="Eukaryota"/>
</dbReference>
<dbReference type="GeneTree" id="ENSGT00390000004360"/>
<dbReference type="InParanoid" id="Q9H9S4"/>
<dbReference type="OMA" id="HYNEFTR"/>
<dbReference type="OrthoDB" id="609103at2759"/>
<dbReference type="PAN-GO" id="Q9H9S4">
    <property type="GO annotations" value="2 GO annotations based on evolutionary models"/>
</dbReference>
<dbReference type="PhylomeDB" id="Q9H9S4"/>
<dbReference type="TreeFam" id="TF314910"/>
<dbReference type="PathwayCommons" id="Q9H9S4"/>
<dbReference type="Reactome" id="R-HSA-380972">
    <property type="pathway name" value="Energy dependent regulation of mTOR by LKB1-AMPK"/>
</dbReference>
<dbReference type="SignaLink" id="Q9H9S4"/>
<dbReference type="BioGRID-ORCS" id="81617">
    <property type="hits" value="8 hits in 1106 CRISPR screens"/>
</dbReference>
<dbReference type="ChiTaRS" id="CAB39L">
    <property type="organism name" value="human"/>
</dbReference>
<dbReference type="EvolutionaryTrace" id="Q9H9S4"/>
<dbReference type="GeneWiki" id="CAB39L"/>
<dbReference type="GenomeRNAi" id="81617"/>
<dbReference type="Pharos" id="Q9H9S4">
    <property type="development level" value="Tbio"/>
</dbReference>
<dbReference type="PRO" id="PR:Q9H9S4"/>
<dbReference type="Proteomes" id="UP000005640">
    <property type="component" value="Chromosome 13"/>
</dbReference>
<dbReference type="RNAct" id="Q9H9S4">
    <property type="molecule type" value="protein"/>
</dbReference>
<dbReference type="Bgee" id="ENSG00000102547">
    <property type="expression patterns" value="Expressed in decidua and 180 other cell types or tissues"/>
</dbReference>
<dbReference type="ExpressionAtlas" id="Q9H9S4">
    <property type="expression patterns" value="baseline and differential"/>
</dbReference>
<dbReference type="GO" id="GO:0005737">
    <property type="term" value="C:cytoplasm"/>
    <property type="evidence" value="ECO:0000250"/>
    <property type="project" value="ComplexPortal"/>
</dbReference>
<dbReference type="GO" id="GO:0005829">
    <property type="term" value="C:cytosol"/>
    <property type="evidence" value="ECO:0000304"/>
    <property type="project" value="Reactome"/>
</dbReference>
<dbReference type="GO" id="GO:1902554">
    <property type="term" value="C:serine/threonine protein kinase complex"/>
    <property type="evidence" value="ECO:0000250"/>
    <property type="project" value="ComplexPortal"/>
</dbReference>
<dbReference type="GO" id="GO:0043539">
    <property type="term" value="F:protein serine/threonine kinase activator activity"/>
    <property type="evidence" value="ECO:0000318"/>
    <property type="project" value="GO_Central"/>
</dbReference>
<dbReference type="GO" id="GO:0035556">
    <property type="term" value="P:intracellular signal transduction"/>
    <property type="evidence" value="ECO:0000318"/>
    <property type="project" value="GO_Central"/>
</dbReference>
<dbReference type="FunFam" id="1.25.10.10:FF:000025">
    <property type="entry name" value="Calcium-binding protein 39"/>
    <property type="match status" value="1"/>
</dbReference>
<dbReference type="Gene3D" id="1.25.10.10">
    <property type="entry name" value="Leucine-rich Repeat Variant"/>
    <property type="match status" value="1"/>
</dbReference>
<dbReference type="InterPro" id="IPR011989">
    <property type="entry name" value="ARM-like"/>
</dbReference>
<dbReference type="InterPro" id="IPR016024">
    <property type="entry name" value="ARM-type_fold"/>
</dbReference>
<dbReference type="InterPro" id="IPR013878">
    <property type="entry name" value="Mo25"/>
</dbReference>
<dbReference type="PANTHER" id="PTHR10182:SF9">
    <property type="entry name" value="CALCIUM-BINDING PROTEIN 39-LIKE"/>
    <property type="match status" value="1"/>
</dbReference>
<dbReference type="PANTHER" id="PTHR10182">
    <property type="entry name" value="CALCIUM-BINDING PROTEIN 39-RELATED"/>
    <property type="match status" value="1"/>
</dbReference>
<dbReference type="Pfam" id="PF08569">
    <property type="entry name" value="Mo25"/>
    <property type="match status" value="1"/>
</dbReference>
<dbReference type="SUPFAM" id="SSF48371">
    <property type="entry name" value="ARM repeat"/>
    <property type="match status" value="1"/>
</dbReference>
<accession>Q9H9S4</accession>
<accession>Q5TAW6</accession>
<accession>Q6WG71</accession>
<accession>Q96FG1</accession>
<accession>Q9BZ33</accession>
<feature type="chain" id="PRO_0000209826" description="Calcium-binding protein 39-like">
    <location>
        <begin position="1"/>
        <end position="337"/>
    </location>
</feature>
<feature type="sequence conflict" description="In Ref. 3; AAH10993." evidence="2" ref="3">
    <original>G</original>
    <variation>E</variation>
    <location>
        <position position="93"/>
    </location>
</feature>
<feature type="sequence conflict" description="In Ref. 4; BAB14147." evidence="2" ref="4">
    <original>A</original>
    <variation>V</variation>
    <location>
        <position position="156"/>
    </location>
</feature>
<feature type="helix" evidence="3">
    <location>
        <begin position="16"/>
        <end position="29"/>
    </location>
</feature>
<feature type="helix" evidence="3">
    <location>
        <begin position="33"/>
        <end position="36"/>
    </location>
</feature>
<feature type="helix" evidence="3">
    <location>
        <begin position="38"/>
        <end position="53"/>
    </location>
</feature>
<feature type="helix" evidence="3">
    <location>
        <begin position="66"/>
        <end position="76"/>
    </location>
</feature>
<feature type="helix" evidence="3">
    <location>
        <begin position="78"/>
        <end position="84"/>
    </location>
</feature>
<feature type="helix" evidence="3">
    <location>
        <begin position="91"/>
        <end position="105"/>
    </location>
</feature>
<feature type="helix" evidence="3">
    <location>
        <begin position="114"/>
        <end position="121"/>
    </location>
</feature>
<feature type="helix" evidence="3">
    <location>
        <begin position="124"/>
        <end position="131"/>
    </location>
</feature>
<feature type="helix" evidence="3">
    <location>
        <begin position="132"/>
        <end position="134"/>
    </location>
</feature>
<feature type="turn" evidence="3">
    <location>
        <begin position="136"/>
        <end position="138"/>
    </location>
</feature>
<feature type="helix" evidence="3">
    <location>
        <begin position="139"/>
        <end position="149"/>
    </location>
</feature>
<feature type="helix" evidence="3">
    <location>
        <begin position="153"/>
        <end position="160"/>
    </location>
</feature>
<feature type="helix" evidence="3">
    <location>
        <begin position="163"/>
        <end position="167"/>
    </location>
</feature>
<feature type="helix" evidence="3">
    <location>
        <begin position="168"/>
        <end position="171"/>
    </location>
</feature>
<feature type="helix" evidence="3">
    <location>
        <begin position="177"/>
        <end position="192"/>
    </location>
</feature>
<feature type="helix" evidence="3">
    <location>
        <begin position="195"/>
        <end position="204"/>
    </location>
</feature>
<feature type="helix" evidence="3">
    <location>
        <begin position="206"/>
        <end position="217"/>
    </location>
</feature>
<feature type="helix" evidence="3">
    <location>
        <begin position="222"/>
        <end position="237"/>
    </location>
</feature>
<feature type="helix" evidence="3">
    <location>
        <begin position="239"/>
        <end position="241"/>
    </location>
</feature>
<feature type="helix" evidence="3">
    <location>
        <begin position="242"/>
        <end position="248"/>
    </location>
</feature>
<feature type="helix" evidence="3">
    <location>
        <begin position="252"/>
        <end position="261"/>
    </location>
</feature>
<feature type="helix" evidence="3">
    <location>
        <begin position="267"/>
        <end position="282"/>
    </location>
</feature>
<feature type="helix" evidence="3">
    <location>
        <begin position="288"/>
        <end position="296"/>
    </location>
</feature>
<feature type="helix" evidence="3">
    <location>
        <begin position="298"/>
        <end position="307"/>
    </location>
</feature>
<feature type="turn" evidence="3">
    <location>
        <begin position="308"/>
        <end position="311"/>
    </location>
</feature>
<feature type="helix" evidence="3">
    <location>
        <begin position="316"/>
        <end position="330"/>
    </location>
</feature>
<comment type="function">
    <text evidence="1">Component of a complex that binds and activates STK11/LKB1. In the complex, required to stabilize the interaction between CAB39/MO25 (CAB39/MO25alpha or CAB39L/MO25beta) and STK11/LKB1 (By similarity).</text>
</comment>
<comment type="subunit">
    <text evidence="1">Component of a trimeric complex composed of STK11/LKB1, STRAD (STRADA or STRADB) and CAB39/MO25 (CAB39/MO25alpha or CAB39L/MO25beta): the complex tethers STK11/LKB1 in the cytoplasm and stimulates its catalytic activity.</text>
</comment>
<comment type="interaction">
    <interactant intactId="EBI-1047244">
        <id>Q9H9S4</id>
    </interactant>
    <interactant intactId="EBI-929476">
        <id>P20591</id>
        <label>MX1</label>
    </interactant>
    <organismsDiffer>false</organismsDiffer>
    <experiments>3</experiments>
</comment>
<comment type="interaction">
    <interactant intactId="EBI-1047244">
        <id>Q9H9S4</id>
    </interactant>
    <interactant intactId="EBI-2513111">
        <id>Q9UQR0</id>
        <label>SCML2</label>
    </interactant>
    <organismsDiffer>false</organismsDiffer>
    <experiments>3</experiments>
</comment>
<comment type="interaction">
    <interactant intactId="EBI-1047244">
        <id>Q9H9S4</id>
    </interactant>
    <interactant intactId="EBI-5235340">
        <id>Q7Z699</id>
        <label>SPRED1</label>
    </interactant>
    <organismsDiffer>false</organismsDiffer>
    <experiments>3</experiments>
</comment>
<comment type="miscellaneous">
    <text>Found in serum of 50% of patients with acute monocytic leukemia.</text>
</comment>
<comment type="similarity">
    <text evidence="2">Belongs to the Mo25 family.</text>
</comment>
<comment type="sequence caution" evidence="2">
    <conflict type="erroneous initiation">
        <sequence resource="EMBL-CDS" id="BAB14147"/>
    </conflict>
</comment>
<keyword id="KW-0002">3D-structure</keyword>
<keyword id="KW-1267">Proteomics identification</keyword>
<keyword id="KW-1185">Reference proteome</keyword>
<gene>
    <name type="primary">CAB39L</name>
</gene>